<organism>
    <name type="scientific">Buchnera aphidicola subsp. Acyrthosiphon pisum (strain Tuc7)</name>
    <dbReference type="NCBI Taxonomy" id="561501"/>
    <lineage>
        <taxon>Bacteria</taxon>
        <taxon>Pseudomonadati</taxon>
        <taxon>Pseudomonadota</taxon>
        <taxon>Gammaproteobacteria</taxon>
        <taxon>Enterobacterales</taxon>
        <taxon>Erwiniaceae</taxon>
        <taxon>Buchnera</taxon>
    </lineage>
</organism>
<gene>
    <name evidence="1" type="primary">speD</name>
    <name type="ordered locus">BUAPTUC7_207</name>
</gene>
<protein>
    <recommendedName>
        <fullName evidence="1">S-adenosylmethionine decarboxylase proenzyme</fullName>
        <shortName evidence="1">AdoMetDC</shortName>
        <shortName evidence="1">SAMDC</shortName>
        <ecNumber evidence="1">4.1.1.50</ecNumber>
    </recommendedName>
    <component>
        <recommendedName>
            <fullName evidence="1">S-adenosylmethionine decarboxylase beta chain</fullName>
        </recommendedName>
    </component>
    <component>
        <recommendedName>
            <fullName evidence="1">S-adenosylmethionine decarboxylase alpha chain</fullName>
        </recommendedName>
    </component>
</protein>
<keyword id="KW-0068">Autocatalytic cleavage</keyword>
<keyword id="KW-0210">Decarboxylase</keyword>
<keyword id="KW-0456">Lyase</keyword>
<keyword id="KW-0620">Polyamine biosynthesis</keyword>
<keyword id="KW-0670">Pyruvate</keyword>
<keyword id="KW-0949">S-adenosyl-L-methionine</keyword>
<keyword id="KW-0704">Schiff base</keyword>
<keyword id="KW-0745">Spermidine biosynthesis</keyword>
<keyword id="KW-0865">Zymogen</keyword>
<name>SPED_BUCAT</name>
<dbReference type="EC" id="4.1.1.50" evidence="1"/>
<dbReference type="EMBL" id="CP001158">
    <property type="protein sequence ID" value="ACL30027.1"/>
    <property type="molecule type" value="Genomic_DNA"/>
</dbReference>
<dbReference type="KEGG" id="bau:BUAPTUC7_207"/>
<dbReference type="HOGENOM" id="CLU_092007_0_0_6"/>
<dbReference type="UniPathway" id="UPA00331">
    <property type="reaction ID" value="UER00451"/>
</dbReference>
<dbReference type="GO" id="GO:0005829">
    <property type="term" value="C:cytosol"/>
    <property type="evidence" value="ECO:0007669"/>
    <property type="project" value="TreeGrafter"/>
</dbReference>
<dbReference type="GO" id="GO:0004014">
    <property type="term" value="F:adenosylmethionine decarboxylase activity"/>
    <property type="evidence" value="ECO:0007669"/>
    <property type="project" value="UniProtKB-UniRule"/>
</dbReference>
<dbReference type="GO" id="GO:0008295">
    <property type="term" value="P:spermidine biosynthetic process"/>
    <property type="evidence" value="ECO:0007669"/>
    <property type="project" value="UniProtKB-UniRule"/>
</dbReference>
<dbReference type="Gene3D" id="3.60.90.10">
    <property type="entry name" value="S-adenosylmethionine decarboxylase"/>
    <property type="match status" value="1"/>
</dbReference>
<dbReference type="HAMAP" id="MF_00465">
    <property type="entry name" value="AdoMetDC_2"/>
    <property type="match status" value="1"/>
</dbReference>
<dbReference type="InterPro" id="IPR003826">
    <property type="entry name" value="AdoMetDC_fam_prok"/>
</dbReference>
<dbReference type="InterPro" id="IPR009165">
    <property type="entry name" value="S-AdoMet_deCO2ase_bac"/>
</dbReference>
<dbReference type="InterPro" id="IPR016067">
    <property type="entry name" value="S-AdoMet_deCO2ase_core"/>
</dbReference>
<dbReference type="NCBIfam" id="TIGR03331">
    <property type="entry name" value="SAM_DCase_Eco"/>
    <property type="match status" value="1"/>
</dbReference>
<dbReference type="PANTHER" id="PTHR33866">
    <property type="entry name" value="S-ADENOSYLMETHIONINE DECARBOXYLASE PROENZYME"/>
    <property type="match status" value="1"/>
</dbReference>
<dbReference type="PANTHER" id="PTHR33866:SF1">
    <property type="entry name" value="S-ADENOSYLMETHIONINE DECARBOXYLASE PROENZYME"/>
    <property type="match status" value="1"/>
</dbReference>
<dbReference type="Pfam" id="PF02675">
    <property type="entry name" value="AdoMet_dc"/>
    <property type="match status" value="1"/>
</dbReference>
<dbReference type="PIRSF" id="PIRSF001356">
    <property type="entry name" value="SAM_decarboxylas"/>
    <property type="match status" value="1"/>
</dbReference>
<dbReference type="SUPFAM" id="SSF56276">
    <property type="entry name" value="S-adenosylmethionine decarboxylase"/>
    <property type="match status" value="1"/>
</dbReference>
<reference key="1">
    <citation type="journal article" date="2009" name="Science">
        <title>The dynamics and time scale of ongoing genomic erosion in symbiotic bacteria.</title>
        <authorList>
            <person name="Moran N.A."/>
            <person name="McLaughlin H.J."/>
            <person name="Sorek R."/>
        </authorList>
    </citation>
    <scope>NUCLEOTIDE SEQUENCE [LARGE SCALE GENOMIC DNA]</scope>
    <source>
        <strain>Tuc7</strain>
    </source>
</reference>
<accession>B8D7B2</accession>
<proteinExistence type="inferred from homology"/>
<feature type="chain" id="PRO_1000193162" description="S-adenosylmethionine decarboxylase beta chain" evidence="1">
    <location>
        <begin position="1"/>
        <end position="113"/>
    </location>
</feature>
<feature type="chain" id="PRO_1000135440" description="S-adenosylmethionine decarboxylase alpha chain" evidence="1">
    <location>
        <begin position="114"/>
        <end position="265"/>
    </location>
</feature>
<feature type="active site" description="Schiff-base intermediate with substrate; via pyruvic acid" evidence="1">
    <location>
        <position position="114"/>
    </location>
</feature>
<feature type="active site" description="Proton acceptor; for processing activity" evidence="1">
    <location>
        <position position="119"/>
    </location>
</feature>
<feature type="active site" description="Proton donor; for catalytic activity" evidence="1">
    <location>
        <position position="142"/>
    </location>
</feature>
<feature type="site" description="Cleavage (non-hydrolytic); by autolysis" evidence="1">
    <location>
        <begin position="113"/>
        <end position="114"/>
    </location>
</feature>
<feature type="modified residue" description="Pyruvic acid (Ser); by autocatalysis" evidence="1">
    <location>
        <position position="114"/>
    </location>
</feature>
<evidence type="ECO:0000255" key="1">
    <source>
        <dbReference type="HAMAP-Rule" id="MF_00465"/>
    </source>
</evidence>
<sequence length="265" mass="30922">MIKLQKLKLYGFNNLTKSLSFCIYDICYANTNDSRNSYISYIDEQYNAIRLTKILKKTCSIIGANVLNIFHQDYEPQGASVTILVCEEPMSMEKIDALNKNIVSSSVLAHLDKSHICVHTYPESHPQSGICTFRADIEVSTCGIISPLNALNYLIHQLESDIVTIEYRVRGFTRDIHGIKHFIDHKINSIQNFMSDDIKSMYDMVDVNVYQENIFHTRMLLREFNLKNYLFNINLENLEKEERSYIMKLLSKEMREIYYGRNISR</sequence>
<comment type="function">
    <text evidence="1">Catalyzes the decarboxylation of S-adenosylmethionine to S-adenosylmethioninamine (dcAdoMet), the propylamine donor required for the synthesis of the polyamines spermine and spermidine from the diamine putrescine.</text>
</comment>
<comment type="catalytic activity">
    <reaction evidence="1">
        <text>S-adenosyl-L-methionine + H(+) = S-adenosyl 3-(methylsulfanyl)propylamine + CO2</text>
        <dbReference type="Rhea" id="RHEA:15981"/>
        <dbReference type="ChEBI" id="CHEBI:15378"/>
        <dbReference type="ChEBI" id="CHEBI:16526"/>
        <dbReference type="ChEBI" id="CHEBI:57443"/>
        <dbReference type="ChEBI" id="CHEBI:59789"/>
        <dbReference type="EC" id="4.1.1.50"/>
    </reaction>
</comment>
<comment type="cofactor">
    <cofactor evidence="1">
        <name>pyruvate</name>
        <dbReference type="ChEBI" id="CHEBI:15361"/>
    </cofactor>
    <text evidence="1">Binds 1 pyruvoyl group covalently per subunit.</text>
</comment>
<comment type="pathway">
    <text evidence="1">Amine and polyamine biosynthesis; S-adenosylmethioninamine biosynthesis; S-adenosylmethioninamine from S-adenosyl-L-methionine: step 1/1.</text>
</comment>
<comment type="subunit">
    <text evidence="1">Heterooctamer of four alpha and four beta chains arranged as a tetramer of alpha/beta heterodimers.</text>
</comment>
<comment type="PTM">
    <text evidence="1">Is synthesized initially as an inactive proenzyme. Formation of the active enzyme involves a self-maturation process in which the active site pyruvoyl group is generated from an internal serine residue via an autocatalytic post-translational modification. Two non-identical subunits are generated from the proenzyme in this reaction, and the pyruvate is formed at the N-terminus of the alpha chain, which is derived from the carboxyl end of the proenzyme. The post-translation cleavage follows an unusual pathway, termed non-hydrolytic serinolysis, in which the side chain hydroxyl group of the serine supplies its oxygen atom to form the C-terminus of the beta chain, while the remainder of the serine residue undergoes an oxidative deamination to produce ammonia and the pyruvoyl group blocking the N-terminus of the alpha chain.</text>
</comment>
<comment type="similarity">
    <text evidence="1">Belongs to the prokaryotic AdoMetDC family. Type 2 subfamily.</text>
</comment>